<organism>
    <name type="scientific">Acidovorax sp. (strain JS42)</name>
    <dbReference type="NCBI Taxonomy" id="232721"/>
    <lineage>
        <taxon>Bacteria</taxon>
        <taxon>Pseudomonadati</taxon>
        <taxon>Pseudomonadota</taxon>
        <taxon>Betaproteobacteria</taxon>
        <taxon>Burkholderiales</taxon>
        <taxon>Comamonadaceae</taxon>
        <taxon>Acidovorax</taxon>
    </lineage>
</organism>
<proteinExistence type="inferred from homology"/>
<protein>
    <recommendedName>
        <fullName evidence="1">GMP reductase</fullName>
        <ecNumber evidence="1">1.7.1.7</ecNumber>
    </recommendedName>
    <alternativeName>
        <fullName evidence="1">Guanosine 5'-monophosphate oxidoreductase</fullName>
        <shortName evidence="1">Guanosine monophosphate reductase</shortName>
    </alternativeName>
</protein>
<keyword id="KW-0521">NADP</keyword>
<keyword id="KW-0560">Oxidoreductase</keyword>
<accession>A1WB23</accession>
<name>GUAC_ACISJ</name>
<gene>
    <name evidence="1" type="primary">guaC</name>
    <name type="ordered locus">Ajs_3326</name>
</gene>
<comment type="function">
    <text evidence="1">Catalyzes the irreversible NADPH-dependent deamination of GMP to IMP. It functions in the conversion of nucleobase, nucleoside and nucleotide derivatives of G to A nucleotides, and in maintaining the intracellular balance of A and G nucleotides.</text>
</comment>
<comment type="catalytic activity">
    <reaction evidence="1">
        <text>IMP + NH4(+) + NADP(+) = GMP + NADPH + 2 H(+)</text>
        <dbReference type="Rhea" id="RHEA:17185"/>
        <dbReference type="ChEBI" id="CHEBI:15378"/>
        <dbReference type="ChEBI" id="CHEBI:28938"/>
        <dbReference type="ChEBI" id="CHEBI:57783"/>
        <dbReference type="ChEBI" id="CHEBI:58053"/>
        <dbReference type="ChEBI" id="CHEBI:58115"/>
        <dbReference type="ChEBI" id="CHEBI:58349"/>
        <dbReference type="EC" id="1.7.1.7"/>
    </reaction>
</comment>
<comment type="similarity">
    <text evidence="1">Belongs to the IMPDH/GMPR family. GuaC type 2 subfamily.</text>
</comment>
<reference key="1">
    <citation type="submission" date="2006-12" db="EMBL/GenBank/DDBJ databases">
        <title>Complete sequence of chromosome 1 of Acidovorax sp. JS42.</title>
        <authorList>
            <person name="Copeland A."/>
            <person name="Lucas S."/>
            <person name="Lapidus A."/>
            <person name="Barry K."/>
            <person name="Detter J.C."/>
            <person name="Glavina del Rio T."/>
            <person name="Dalin E."/>
            <person name="Tice H."/>
            <person name="Pitluck S."/>
            <person name="Chertkov O."/>
            <person name="Brettin T."/>
            <person name="Bruce D."/>
            <person name="Han C."/>
            <person name="Tapia R."/>
            <person name="Gilna P."/>
            <person name="Schmutz J."/>
            <person name="Larimer F."/>
            <person name="Land M."/>
            <person name="Hauser L."/>
            <person name="Kyrpides N."/>
            <person name="Kim E."/>
            <person name="Stahl D."/>
            <person name="Richardson P."/>
        </authorList>
    </citation>
    <scope>NUCLEOTIDE SEQUENCE [LARGE SCALE GENOMIC DNA]</scope>
    <source>
        <strain>JS42</strain>
    </source>
</reference>
<sequence>MEIFDYDNILLLPRKCRVESRSECDTSVELGERRFRLPVVPANMKTVVDEKICTWLAQNGYFYVMHRFDLDNVQFVKDMHAQGCFASISLGVKQPDYDTVDRFVAEGICPEYITIDIAHGHADSVKNMITYLKAKIPAAFVIAGNVGTPEAVIDLENWGADATKVGIGPGKVCITKLKTGFGTGGWQLSALKWCARVATKPIIADGGIRSHGDIAKSVRFGATMVMVGSLFAGHEESPGKTVEVDGELYKEYYGSASDFNKGEYKHVEGKRILEPIKGKLADTLTEMEQDIQSSISYSGGKKLMDIRKVNYVILGGDNAGEHLLM</sequence>
<dbReference type="EC" id="1.7.1.7" evidence="1"/>
<dbReference type="EMBL" id="CP000539">
    <property type="protein sequence ID" value="ABM43448.1"/>
    <property type="molecule type" value="Genomic_DNA"/>
</dbReference>
<dbReference type="SMR" id="A1WB23"/>
<dbReference type="STRING" id="232721.Ajs_3326"/>
<dbReference type="KEGG" id="ajs:Ajs_3326"/>
<dbReference type="eggNOG" id="COG0516">
    <property type="taxonomic scope" value="Bacteria"/>
</dbReference>
<dbReference type="HOGENOM" id="CLU_022552_5_0_4"/>
<dbReference type="Proteomes" id="UP000000645">
    <property type="component" value="Chromosome"/>
</dbReference>
<dbReference type="GO" id="GO:0005829">
    <property type="term" value="C:cytosol"/>
    <property type="evidence" value="ECO:0007669"/>
    <property type="project" value="TreeGrafter"/>
</dbReference>
<dbReference type="GO" id="GO:1902560">
    <property type="term" value="C:GMP reductase complex"/>
    <property type="evidence" value="ECO:0007669"/>
    <property type="project" value="InterPro"/>
</dbReference>
<dbReference type="GO" id="GO:0003920">
    <property type="term" value="F:GMP reductase activity"/>
    <property type="evidence" value="ECO:0007669"/>
    <property type="project" value="UniProtKB-UniRule"/>
</dbReference>
<dbReference type="GO" id="GO:0006163">
    <property type="term" value="P:purine nucleotide metabolic process"/>
    <property type="evidence" value="ECO:0007669"/>
    <property type="project" value="UniProtKB-UniRule"/>
</dbReference>
<dbReference type="CDD" id="cd00381">
    <property type="entry name" value="IMPDH"/>
    <property type="match status" value="1"/>
</dbReference>
<dbReference type="Gene3D" id="3.20.20.70">
    <property type="entry name" value="Aldolase class I"/>
    <property type="match status" value="1"/>
</dbReference>
<dbReference type="HAMAP" id="MF_01511">
    <property type="entry name" value="GMP_reduct_type2"/>
    <property type="match status" value="1"/>
</dbReference>
<dbReference type="InterPro" id="IPR013785">
    <property type="entry name" value="Aldolase_TIM"/>
</dbReference>
<dbReference type="InterPro" id="IPR050139">
    <property type="entry name" value="GMP_reductase"/>
</dbReference>
<dbReference type="InterPro" id="IPR005994">
    <property type="entry name" value="GuaC_type_2"/>
</dbReference>
<dbReference type="InterPro" id="IPR015875">
    <property type="entry name" value="IMP_DH/GMP_Rdtase_CS"/>
</dbReference>
<dbReference type="InterPro" id="IPR001093">
    <property type="entry name" value="IMP_DH_GMPRt"/>
</dbReference>
<dbReference type="NCBIfam" id="TIGR01306">
    <property type="entry name" value="GMP_reduct_2"/>
    <property type="match status" value="1"/>
</dbReference>
<dbReference type="NCBIfam" id="NF003966">
    <property type="entry name" value="PRK05458.1"/>
    <property type="match status" value="1"/>
</dbReference>
<dbReference type="PANTHER" id="PTHR43170">
    <property type="entry name" value="GMP REDUCTASE"/>
    <property type="match status" value="1"/>
</dbReference>
<dbReference type="PANTHER" id="PTHR43170:SF5">
    <property type="entry name" value="GMP REDUCTASE"/>
    <property type="match status" value="1"/>
</dbReference>
<dbReference type="Pfam" id="PF00478">
    <property type="entry name" value="IMPDH"/>
    <property type="match status" value="1"/>
</dbReference>
<dbReference type="PIRSF" id="PIRSF036500">
    <property type="entry name" value="GMP_red_Firmic"/>
    <property type="match status" value="1"/>
</dbReference>
<dbReference type="SMART" id="SM01240">
    <property type="entry name" value="IMPDH"/>
    <property type="match status" value="1"/>
</dbReference>
<dbReference type="SUPFAM" id="SSF51412">
    <property type="entry name" value="Inosine monophosphate dehydrogenase (IMPDH)"/>
    <property type="match status" value="1"/>
</dbReference>
<dbReference type="PROSITE" id="PS00487">
    <property type="entry name" value="IMP_DH_GMP_RED"/>
    <property type="match status" value="1"/>
</dbReference>
<evidence type="ECO:0000255" key="1">
    <source>
        <dbReference type="HAMAP-Rule" id="MF_01511"/>
    </source>
</evidence>
<feature type="chain" id="PRO_0000294270" description="GMP reductase">
    <location>
        <begin position="1"/>
        <end position="325"/>
    </location>
</feature>
<feature type="active site" description="Thioimidate intermediate" evidence="1">
    <location>
        <position position="173"/>
    </location>
</feature>
<feature type="binding site" evidence="1">
    <location>
        <begin position="202"/>
        <end position="225"/>
    </location>
    <ligand>
        <name>NADP(+)</name>
        <dbReference type="ChEBI" id="CHEBI:58349"/>
    </ligand>
</feature>